<dbReference type="EC" id="5.6.2.1" evidence="1"/>
<dbReference type="EMBL" id="AP008934">
    <property type="protein sequence ID" value="BAE17804.1"/>
    <property type="molecule type" value="Genomic_DNA"/>
</dbReference>
<dbReference type="RefSeq" id="WP_011302595.1">
    <property type="nucleotide sequence ID" value="NZ_MTGA01000036.1"/>
</dbReference>
<dbReference type="SMR" id="Q49ZH2"/>
<dbReference type="GeneID" id="23780840"/>
<dbReference type="KEGG" id="ssp:SSP0659"/>
<dbReference type="PATRIC" id="fig|342451.11.peg.661"/>
<dbReference type="eggNOG" id="COG0550">
    <property type="taxonomic scope" value="Bacteria"/>
</dbReference>
<dbReference type="eggNOG" id="COG0551">
    <property type="taxonomic scope" value="Bacteria"/>
</dbReference>
<dbReference type="HOGENOM" id="CLU_002929_5_2_9"/>
<dbReference type="OrthoDB" id="9803554at2"/>
<dbReference type="Proteomes" id="UP000006371">
    <property type="component" value="Chromosome"/>
</dbReference>
<dbReference type="GO" id="GO:0043597">
    <property type="term" value="C:cytoplasmic replication fork"/>
    <property type="evidence" value="ECO:0007669"/>
    <property type="project" value="TreeGrafter"/>
</dbReference>
<dbReference type="GO" id="GO:0003677">
    <property type="term" value="F:DNA binding"/>
    <property type="evidence" value="ECO:0007669"/>
    <property type="project" value="UniProtKB-KW"/>
</dbReference>
<dbReference type="GO" id="GO:0003917">
    <property type="term" value="F:DNA topoisomerase type I (single strand cut, ATP-independent) activity"/>
    <property type="evidence" value="ECO:0007669"/>
    <property type="project" value="UniProtKB-UniRule"/>
</dbReference>
<dbReference type="GO" id="GO:0000287">
    <property type="term" value="F:magnesium ion binding"/>
    <property type="evidence" value="ECO:0007669"/>
    <property type="project" value="UniProtKB-UniRule"/>
</dbReference>
<dbReference type="GO" id="GO:0006310">
    <property type="term" value="P:DNA recombination"/>
    <property type="evidence" value="ECO:0007669"/>
    <property type="project" value="TreeGrafter"/>
</dbReference>
<dbReference type="GO" id="GO:0006281">
    <property type="term" value="P:DNA repair"/>
    <property type="evidence" value="ECO:0007669"/>
    <property type="project" value="TreeGrafter"/>
</dbReference>
<dbReference type="GO" id="GO:0006265">
    <property type="term" value="P:DNA topological change"/>
    <property type="evidence" value="ECO:0007669"/>
    <property type="project" value="UniProtKB-UniRule"/>
</dbReference>
<dbReference type="CDD" id="cd00186">
    <property type="entry name" value="TOP1Ac"/>
    <property type="match status" value="1"/>
</dbReference>
<dbReference type="CDD" id="cd03362">
    <property type="entry name" value="TOPRIM_TopoIA_TopoIII"/>
    <property type="match status" value="1"/>
</dbReference>
<dbReference type="Gene3D" id="3.40.50.140">
    <property type="match status" value="1"/>
</dbReference>
<dbReference type="Gene3D" id="1.10.460.10">
    <property type="entry name" value="Topoisomerase I, domain 2"/>
    <property type="match status" value="1"/>
</dbReference>
<dbReference type="Gene3D" id="2.70.20.10">
    <property type="entry name" value="Topoisomerase I, domain 3"/>
    <property type="match status" value="1"/>
</dbReference>
<dbReference type="Gene3D" id="1.10.290.10">
    <property type="entry name" value="Topoisomerase I, domain 4"/>
    <property type="match status" value="1"/>
</dbReference>
<dbReference type="HAMAP" id="MF_00953">
    <property type="entry name" value="Topoisom_3_prok"/>
    <property type="match status" value="1"/>
</dbReference>
<dbReference type="InterPro" id="IPR000380">
    <property type="entry name" value="Topo_IA"/>
</dbReference>
<dbReference type="InterPro" id="IPR003601">
    <property type="entry name" value="Topo_IA_2"/>
</dbReference>
<dbReference type="InterPro" id="IPR023406">
    <property type="entry name" value="Topo_IA_AS"/>
</dbReference>
<dbReference type="InterPro" id="IPR013497">
    <property type="entry name" value="Topo_IA_cen"/>
</dbReference>
<dbReference type="InterPro" id="IPR013824">
    <property type="entry name" value="Topo_IA_cen_sub1"/>
</dbReference>
<dbReference type="InterPro" id="IPR013825">
    <property type="entry name" value="Topo_IA_cen_sub2"/>
</dbReference>
<dbReference type="InterPro" id="IPR013826">
    <property type="entry name" value="Topo_IA_cen_sub3"/>
</dbReference>
<dbReference type="InterPro" id="IPR023405">
    <property type="entry name" value="Topo_IA_core_domain"/>
</dbReference>
<dbReference type="InterPro" id="IPR003602">
    <property type="entry name" value="Topo_IA_DNA-bd_dom"/>
</dbReference>
<dbReference type="InterPro" id="IPR005738">
    <property type="entry name" value="TopoIII"/>
</dbReference>
<dbReference type="InterPro" id="IPR006171">
    <property type="entry name" value="TOPRIM_dom"/>
</dbReference>
<dbReference type="InterPro" id="IPR034144">
    <property type="entry name" value="TOPRIM_TopoIII"/>
</dbReference>
<dbReference type="NCBIfam" id="NF005829">
    <property type="entry name" value="PRK07726.1"/>
    <property type="match status" value="1"/>
</dbReference>
<dbReference type="NCBIfam" id="TIGR01056">
    <property type="entry name" value="topB"/>
    <property type="match status" value="1"/>
</dbReference>
<dbReference type="PANTHER" id="PTHR11390:SF21">
    <property type="entry name" value="DNA TOPOISOMERASE 3-ALPHA"/>
    <property type="match status" value="1"/>
</dbReference>
<dbReference type="PANTHER" id="PTHR11390">
    <property type="entry name" value="PROKARYOTIC DNA TOPOISOMERASE"/>
    <property type="match status" value="1"/>
</dbReference>
<dbReference type="Pfam" id="PF01131">
    <property type="entry name" value="Topoisom_bac"/>
    <property type="match status" value="1"/>
</dbReference>
<dbReference type="Pfam" id="PF01751">
    <property type="entry name" value="Toprim"/>
    <property type="match status" value="1"/>
</dbReference>
<dbReference type="PRINTS" id="PR00417">
    <property type="entry name" value="PRTPISMRASEI"/>
</dbReference>
<dbReference type="SMART" id="SM00437">
    <property type="entry name" value="TOP1Ac"/>
    <property type="match status" value="1"/>
</dbReference>
<dbReference type="SMART" id="SM00436">
    <property type="entry name" value="TOP1Bc"/>
    <property type="match status" value="1"/>
</dbReference>
<dbReference type="SMART" id="SM00493">
    <property type="entry name" value="TOPRIM"/>
    <property type="match status" value="1"/>
</dbReference>
<dbReference type="SUPFAM" id="SSF56712">
    <property type="entry name" value="Prokaryotic type I DNA topoisomerase"/>
    <property type="match status" value="1"/>
</dbReference>
<dbReference type="PROSITE" id="PS00396">
    <property type="entry name" value="TOPO_IA_1"/>
    <property type="match status" value="1"/>
</dbReference>
<dbReference type="PROSITE" id="PS52039">
    <property type="entry name" value="TOPO_IA_2"/>
    <property type="match status" value="1"/>
</dbReference>
<dbReference type="PROSITE" id="PS50880">
    <property type="entry name" value="TOPRIM"/>
    <property type="match status" value="1"/>
</dbReference>
<accession>Q49ZH2</accession>
<protein>
    <recommendedName>
        <fullName evidence="1">DNA topoisomerase 3</fullName>
        <ecNumber evidence="1">5.6.2.1</ecNumber>
    </recommendedName>
    <alternativeName>
        <fullName evidence="1">DNA topoisomerase III</fullName>
    </alternativeName>
</protein>
<keyword id="KW-0238">DNA-binding</keyword>
<keyword id="KW-0413">Isomerase</keyword>
<keyword id="KW-0460">Magnesium</keyword>
<keyword id="KW-0479">Metal-binding</keyword>
<keyword id="KW-1185">Reference proteome</keyword>
<keyword id="KW-0799">Topoisomerase</keyword>
<organism>
    <name type="scientific">Staphylococcus saprophyticus subsp. saprophyticus (strain ATCC 15305 / DSM 20229 / NCIMB 8711 / NCTC 7292 / S-41)</name>
    <dbReference type="NCBI Taxonomy" id="342451"/>
    <lineage>
        <taxon>Bacteria</taxon>
        <taxon>Bacillati</taxon>
        <taxon>Bacillota</taxon>
        <taxon>Bacilli</taxon>
        <taxon>Bacillales</taxon>
        <taxon>Staphylococcaceae</taxon>
        <taxon>Staphylococcus</taxon>
    </lineage>
</organism>
<evidence type="ECO:0000255" key="1">
    <source>
        <dbReference type="HAMAP-Rule" id="MF_00953"/>
    </source>
</evidence>
<evidence type="ECO:0000255" key="2">
    <source>
        <dbReference type="PROSITE-ProRule" id="PRU01383"/>
    </source>
</evidence>
<feature type="chain" id="PRO_0000286379" description="DNA topoisomerase 3">
    <location>
        <begin position="1"/>
        <end position="712"/>
    </location>
</feature>
<feature type="domain" description="Toprim" evidence="1">
    <location>
        <begin position="2"/>
        <end position="135"/>
    </location>
</feature>
<feature type="domain" description="Topo IA-type catalytic" evidence="2">
    <location>
        <begin position="152"/>
        <end position="581"/>
    </location>
</feature>
<feature type="region of interest" description="Interaction with DNA" evidence="1">
    <location>
        <begin position="186"/>
        <end position="191"/>
    </location>
</feature>
<feature type="active site" description="O-(5'-phospho-DNA)-tyrosine intermediate" evidence="2">
    <location>
        <position position="305"/>
    </location>
</feature>
<feature type="binding site" evidence="1">
    <location>
        <position position="8"/>
    </location>
    <ligand>
        <name>Mg(2+)</name>
        <dbReference type="ChEBI" id="CHEBI:18420"/>
        <note>catalytic</note>
    </ligand>
</feature>
<feature type="binding site" evidence="1">
    <location>
        <position position="104"/>
    </location>
    <ligand>
        <name>Mg(2+)</name>
        <dbReference type="ChEBI" id="CHEBI:18420"/>
        <note>catalytic</note>
    </ligand>
</feature>
<feature type="site" description="Interaction with DNA" evidence="1">
    <location>
        <position position="60"/>
    </location>
</feature>
<feature type="site" description="Interaction with DNA" evidence="1">
    <location>
        <position position="167"/>
    </location>
</feature>
<feature type="site" description="Interaction with DNA" evidence="1">
    <location>
        <position position="175"/>
    </location>
</feature>
<feature type="site" description="Interaction with DNA" evidence="1">
    <location>
        <position position="307"/>
    </location>
</feature>
<name>TOP3_STAS1</name>
<sequence>MKSLIIAEKPSVGRDIANTLNINEKRNGYFENNKYIVTWALGHLVTNATPEQYDASYKEWKLNDLPIIPNKMKTIVISKTRKQFSTVQSLINNNKVKDIIIATDAGREGELVARLILDKAHNKKPTKRLWISSVTNKAIKEGFNKLQDGRKFNNLYHAALARSEADWIVGINATRALTTKYDAQLSLGRVQTPTIQLVQMRQNEINHFKPQTYYTMKLNAAGLTFHCTKPQSHPDKTVLESIKKAIDGQSGHIASISKTHKKAYPQQLYNLTDLQQDAYKRFHLGPKETLNTLQTLYERHKLVTYPRTDSNYLTDDMVDTLKDRLKAIMATSLKDMAKAQMSQTFSSKQRFVNNNKVSDHHAIIPTEVRPDINQLSQRESKIYMMIAQRYLENLMPPHEYEAIAIELKVGQHTFTFKDKVTTKLGFKAIYENKESINTQIDQLQKGTKLNVTKILIEEHETTAPPYFNEGSLLKAMESPQKFFDLSDKKHDKTLKDTGGIGTVATRADIIEKLFNMNAIEARDGKIKVTSKGKQILELAPQKLTSPLLTAEWEEKLLLIEQGKYNASQFISEMKAFTNQVVNEIKESEQNYKHDNLTTTECPTCGKFMIKVKTKNGQMLVCQDPQCKTKKNVQRKTNARCPNCHKKMTLFGRGKDAVYRCVCGHTETQAQMDKRHKNKKSDKVNKKDLKKYMNNDEGIENNPFQDALKGLKF</sequence>
<reference key="1">
    <citation type="journal article" date="2005" name="Proc. Natl. Acad. Sci. U.S.A.">
        <title>Whole genome sequence of Staphylococcus saprophyticus reveals the pathogenesis of uncomplicated urinary tract infection.</title>
        <authorList>
            <person name="Kuroda M."/>
            <person name="Yamashita A."/>
            <person name="Hirakawa H."/>
            <person name="Kumano M."/>
            <person name="Morikawa K."/>
            <person name="Higashide M."/>
            <person name="Maruyama A."/>
            <person name="Inose Y."/>
            <person name="Matoba K."/>
            <person name="Toh H."/>
            <person name="Kuhara S."/>
            <person name="Hattori M."/>
            <person name="Ohta T."/>
        </authorList>
    </citation>
    <scope>NUCLEOTIDE SEQUENCE [LARGE SCALE GENOMIC DNA]</scope>
    <source>
        <strain>ATCC 15305 / DSM 20229 / NCIMB 8711 / NCTC 7292 / S-41</strain>
    </source>
</reference>
<gene>
    <name evidence="1" type="primary">topB</name>
    <name type="ordered locus">SSP0659</name>
</gene>
<comment type="function">
    <text evidence="1">Releases the supercoiling and torsional tension of DNA, which is introduced during the DNA replication and transcription, by transiently cleaving and rejoining one strand of the DNA duplex. Introduces a single-strand break via transesterification at a target site in duplex DNA. The scissile phosphodiester is attacked by the catalytic tyrosine of the enzyme, resulting in the formation of a DNA-(5'-phosphotyrosyl)-enzyme intermediate and the expulsion of a 3'-OH DNA strand. The free DNA strand then undergoes passage around the unbroken strand, thus removing DNA supercoils. Finally, in the religation step, the DNA 3'-OH attacks the covalent intermediate to expel the active-site tyrosine and restore the DNA phosphodiester backbone.</text>
</comment>
<comment type="catalytic activity">
    <reaction evidence="1">
        <text>ATP-independent breakage of single-stranded DNA, followed by passage and rejoining.</text>
        <dbReference type="EC" id="5.6.2.1"/>
    </reaction>
</comment>
<comment type="cofactor">
    <cofactor evidence="1">
        <name>Mg(2+)</name>
        <dbReference type="ChEBI" id="CHEBI:18420"/>
    </cofactor>
</comment>
<comment type="similarity">
    <text evidence="1 2">Belongs to the type IA topoisomerase family.</text>
</comment>
<proteinExistence type="inferred from homology"/>